<keyword id="KW-0238">DNA-binding</keyword>
<keyword id="KW-0287">Flowering</keyword>
<keyword id="KW-0539">Nucleus</keyword>
<keyword id="KW-0804">Transcription</keyword>
<keyword id="KW-0805">Transcription regulation</keyword>
<comment type="function">
    <text evidence="1">Probable transcription factor involved in flower development.</text>
</comment>
<comment type="subcellular location">
    <subcellularLocation>
        <location evidence="2">Nucleus</location>
    </subcellularLocation>
</comment>
<comment type="tissue specificity">
    <text evidence="5">Expressed in flowers and seeds.</text>
</comment>
<dbReference type="EMBL" id="AF373602">
    <property type="protein sequence ID" value="AAM21343.1"/>
    <property type="molecule type" value="Genomic_DNA"/>
</dbReference>
<dbReference type="EMBL" id="AF373602">
    <property type="protein sequence ID" value="CBI38823.3"/>
    <property type="molecule type" value="Genomic_DNA"/>
</dbReference>
<dbReference type="RefSeq" id="NP_001268111.1">
    <property type="nucleotide sequence ID" value="NM_001281182.1"/>
</dbReference>
<dbReference type="SMR" id="Q8LLR1"/>
<dbReference type="STRING" id="29760.Q8LLR1"/>
<dbReference type="PaxDb" id="29760-VIT_15s0048g01270.t01"/>
<dbReference type="EnsemblPlants" id="Vitvi15g00776_t001">
    <property type="protein sequence ID" value="Vitvi15g00776_P001"/>
    <property type="gene ID" value="Vitvi15g00776"/>
</dbReference>
<dbReference type="GeneID" id="100232868"/>
<dbReference type="Gramene" id="Vitvi15g00776_t001">
    <property type="protein sequence ID" value="Vitvi15g00776_P001"/>
    <property type="gene ID" value="Vitvi15g00776"/>
</dbReference>
<dbReference type="KEGG" id="vvi:100232868"/>
<dbReference type="eggNOG" id="KOG0014">
    <property type="taxonomic scope" value="Eukaryota"/>
</dbReference>
<dbReference type="HOGENOM" id="CLU_053053_0_2_1"/>
<dbReference type="OMA" id="NFVQGWV"/>
<dbReference type="OrthoDB" id="1898716at2759"/>
<dbReference type="GO" id="GO:0005634">
    <property type="term" value="C:nucleus"/>
    <property type="evidence" value="ECO:0007669"/>
    <property type="project" value="UniProtKB-SubCell"/>
</dbReference>
<dbReference type="GO" id="GO:0003700">
    <property type="term" value="F:DNA-binding transcription factor activity"/>
    <property type="evidence" value="ECO:0007669"/>
    <property type="project" value="InterPro"/>
</dbReference>
<dbReference type="GO" id="GO:0046983">
    <property type="term" value="F:protein dimerization activity"/>
    <property type="evidence" value="ECO:0007669"/>
    <property type="project" value="InterPro"/>
</dbReference>
<dbReference type="GO" id="GO:0000977">
    <property type="term" value="F:RNA polymerase II transcription regulatory region sequence-specific DNA binding"/>
    <property type="evidence" value="ECO:0007669"/>
    <property type="project" value="InterPro"/>
</dbReference>
<dbReference type="GO" id="GO:0009908">
    <property type="term" value="P:flower development"/>
    <property type="evidence" value="ECO:0007669"/>
    <property type="project" value="UniProtKB-KW"/>
</dbReference>
<dbReference type="GO" id="GO:0045944">
    <property type="term" value="P:positive regulation of transcription by RNA polymerase II"/>
    <property type="evidence" value="ECO:0007669"/>
    <property type="project" value="InterPro"/>
</dbReference>
<dbReference type="CDD" id="cd00265">
    <property type="entry name" value="MADS_MEF2_like"/>
    <property type="match status" value="1"/>
</dbReference>
<dbReference type="FunFam" id="3.40.1810.10:FF:000004">
    <property type="entry name" value="MADS-box transcription factor 1"/>
    <property type="match status" value="1"/>
</dbReference>
<dbReference type="Gene3D" id="3.40.1810.10">
    <property type="entry name" value="Transcription factor, MADS-box"/>
    <property type="match status" value="1"/>
</dbReference>
<dbReference type="InterPro" id="IPR050142">
    <property type="entry name" value="MADS-box/MEF2_TF"/>
</dbReference>
<dbReference type="InterPro" id="IPR033896">
    <property type="entry name" value="MEF2-like_N"/>
</dbReference>
<dbReference type="InterPro" id="IPR002487">
    <property type="entry name" value="TF_Kbox"/>
</dbReference>
<dbReference type="InterPro" id="IPR002100">
    <property type="entry name" value="TF_MADSbox"/>
</dbReference>
<dbReference type="InterPro" id="IPR036879">
    <property type="entry name" value="TF_MADSbox_sf"/>
</dbReference>
<dbReference type="PANTHER" id="PTHR48019">
    <property type="entry name" value="SERUM RESPONSE FACTOR HOMOLOG"/>
    <property type="match status" value="1"/>
</dbReference>
<dbReference type="Pfam" id="PF01486">
    <property type="entry name" value="K-box"/>
    <property type="match status" value="1"/>
</dbReference>
<dbReference type="Pfam" id="PF00319">
    <property type="entry name" value="SRF-TF"/>
    <property type="match status" value="1"/>
</dbReference>
<dbReference type="PRINTS" id="PR00404">
    <property type="entry name" value="MADSDOMAIN"/>
</dbReference>
<dbReference type="SMART" id="SM00432">
    <property type="entry name" value="MADS"/>
    <property type="match status" value="1"/>
</dbReference>
<dbReference type="SUPFAM" id="SSF55455">
    <property type="entry name" value="SRF-like"/>
    <property type="match status" value="1"/>
</dbReference>
<dbReference type="PROSITE" id="PS51297">
    <property type="entry name" value="K_BOX"/>
    <property type="match status" value="1"/>
</dbReference>
<dbReference type="PROSITE" id="PS00350">
    <property type="entry name" value="MADS_BOX_1"/>
    <property type="match status" value="1"/>
</dbReference>
<dbReference type="PROSITE" id="PS50066">
    <property type="entry name" value="MADS_BOX_2"/>
    <property type="match status" value="1"/>
</dbReference>
<name>MADS3_VITVI</name>
<proteinExistence type="evidence at transcript level"/>
<gene>
    <name evidence="8" type="primary">MADS3</name>
    <name evidence="10" type="ordered locus">VIT_15s0048g01270</name>
</gene>
<reference key="1">
    <citation type="journal article" date="2002" name="Plant Sci.">
        <title>Cloning and characterization of grapevine (Vitis vinifera L.) MADS-box genes expressed during inflorescence and berry development.</title>
        <authorList>
            <person name="Boss P.K."/>
            <person name="Sensi E."/>
            <person name="Hua C."/>
            <person name="Davies C."/>
            <person name="Thomas M.R."/>
        </authorList>
    </citation>
    <scope>NUCLEOTIDE SEQUENCE [MRNA]</scope>
    <scope>TISSUE SPECIFICITY</scope>
    <source>
        <strain>cv. Cabernet Sauvignon</strain>
    </source>
</reference>
<reference key="2">
    <citation type="journal article" date="2007" name="Nature">
        <title>The grapevine genome sequence suggests ancestral hexaploidization in major angiosperm phyla.</title>
        <authorList>
            <person name="Jaillon O."/>
            <person name="Aury J.-M."/>
            <person name="Noel B."/>
            <person name="Policriti A."/>
            <person name="Clepet C."/>
            <person name="Casagrande A."/>
            <person name="Choisne N."/>
            <person name="Aubourg S."/>
            <person name="Vitulo N."/>
            <person name="Jubin C."/>
            <person name="Vezzi A."/>
            <person name="Legeai F."/>
            <person name="Hugueney P."/>
            <person name="Dasilva C."/>
            <person name="Horner D."/>
            <person name="Mica E."/>
            <person name="Jublot D."/>
            <person name="Poulain J."/>
            <person name="Bruyere C."/>
            <person name="Billault A."/>
            <person name="Segurens B."/>
            <person name="Gouyvenoux M."/>
            <person name="Ugarte E."/>
            <person name="Cattonaro F."/>
            <person name="Anthouard V."/>
            <person name="Vico V."/>
            <person name="Del Fabbro C."/>
            <person name="Alaux M."/>
            <person name="Di Gaspero G."/>
            <person name="Dumas V."/>
            <person name="Felice N."/>
            <person name="Paillard S."/>
            <person name="Juman I."/>
            <person name="Moroldo M."/>
            <person name="Scalabrin S."/>
            <person name="Canaguier A."/>
            <person name="Le Clainche I."/>
            <person name="Malacrida G."/>
            <person name="Durand E."/>
            <person name="Pesole G."/>
            <person name="Laucou V."/>
            <person name="Chatelet P."/>
            <person name="Merdinoglu D."/>
            <person name="Delledonne M."/>
            <person name="Pezzotti M."/>
            <person name="Lecharny A."/>
            <person name="Scarpelli C."/>
            <person name="Artiguenave F."/>
            <person name="Pe M.E."/>
            <person name="Valle G."/>
            <person name="Morgante M."/>
            <person name="Caboche M."/>
            <person name="Adam-Blondon A.-F."/>
            <person name="Weissenbach J."/>
            <person name="Quetier F."/>
            <person name="Wincker P."/>
        </authorList>
    </citation>
    <scope>NUCLEOTIDE SEQUENCE [LARGE SCALE GENOMIC DNA]</scope>
    <source>
        <strain>cv. Pinot noir / PN40024</strain>
    </source>
</reference>
<reference key="3">
    <citation type="journal article" date="2009" name="Plant Physiol.">
        <title>Genome-wide analysis of MIKCC-type MADS box genes in grapevine.</title>
        <authorList>
            <person name="Diaz-Riquelme J."/>
            <person name="Lijavetzky D."/>
            <person name="Martinez-Zapater J.M."/>
            <person name="Carmona M.J."/>
        </authorList>
    </citation>
    <scope>GENE FAMILY</scope>
</reference>
<reference key="4">
    <citation type="journal article" date="2016" name="BMC Genomics">
        <title>Structural and functional annotation of the MADS-box transcription factor family in grapevine.</title>
        <authorList>
            <person name="Grimplet J."/>
            <person name="Martinez-Zapater J.M."/>
            <person name="Carmona M.J."/>
        </authorList>
    </citation>
    <scope>GENE FAMILY</scope>
</reference>
<feature type="chain" id="PRO_0000447291" description="Agamous-like MADS-box protein MADS3">
    <location>
        <begin position="1"/>
        <end position="244"/>
    </location>
</feature>
<feature type="domain" description="MADS-box" evidence="2">
    <location>
        <begin position="1"/>
        <end position="61"/>
    </location>
</feature>
<feature type="domain" description="K-box" evidence="3">
    <location>
        <begin position="85"/>
        <end position="175"/>
    </location>
</feature>
<feature type="region of interest" description="Disordered" evidence="4">
    <location>
        <begin position="180"/>
        <end position="206"/>
    </location>
</feature>
<feature type="compositionally biased region" description="Polar residues" evidence="4">
    <location>
        <begin position="181"/>
        <end position="204"/>
    </location>
</feature>
<protein>
    <recommendedName>
        <fullName evidence="9">Agamous-like MADS-box protein MADS3</fullName>
    </recommendedName>
    <alternativeName>
        <fullName evidence="9">Agamous-like protein 6</fullName>
        <shortName evidence="6">VvAGL6</shortName>
        <shortName evidence="7">VviAGL6a</shortName>
    </alternativeName>
    <alternativeName>
        <fullName evidence="8">MADS-box protein 3</fullName>
        <shortName evidence="8">VvMADS3</shortName>
    </alternativeName>
</protein>
<accession>Q8LLR1</accession>
<sequence length="244" mass="27763">MGRGRVELKRIENKINRQVTFSKRRNGLLKKAYELSVLCDAEVALIIFSSRGKLYEFGSAGTTKTLERYQRVCYTPQDNNMECETQSWYQEVSKLKAKYESLQRTQRHLLGEDLGPLSVKELQNLEKQLEGALAQARQRKTQMMIEQMEDLRRKERQLGDLNKQLKLKLEAEGQSLKAIQGSWNPSTATAGNSSFPVHPSQSNPMDCEPEPILQIGYHHYVPAEGPSVSKSMAGESNFIQGWVL</sequence>
<evidence type="ECO:0000250" key="1">
    <source>
        <dbReference type="UniProtKB" id="Q0HA25"/>
    </source>
</evidence>
<evidence type="ECO:0000255" key="2">
    <source>
        <dbReference type="PROSITE-ProRule" id="PRU00251"/>
    </source>
</evidence>
<evidence type="ECO:0000255" key="3">
    <source>
        <dbReference type="PROSITE-ProRule" id="PRU00629"/>
    </source>
</evidence>
<evidence type="ECO:0000256" key="4">
    <source>
        <dbReference type="SAM" id="MobiDB-lite"/>
    </source>
</evidence>
<evidence type="ECO:0000269" key="5">
    <source ref="1"/>
</evidence>
<evidence type="ECO:0000303" key="6">
    <source>
    </source>
</evidence>
<evidence type="ECO:0000303" key="7">
    <source>
    </source>
</evidence>
<evidence type="ECO:0000303" key="8">
    <source ref="1"/>
</evidence>
<evidence type="ECO:0000305" key="9"/>
<evidence type="ECO:0000312" key="10">
    <source>
        <dbReference type="EMBL" id="CBI38823.3"/>
    </source>
</evidence>
<organism>
    <name type="scientific">Vitis vinifera</name>
    <name type="common">Grape</name>
    <dbReference type="NCBI Taxonomy" id="29760"/>
    <lineage>
        <taxon>Eukaryota</taxon>
        <taxon>Viridiplantae</taxon>
        <taxon>Streptophyta</taxon>
        <taxon>Embryophyta</taxon>
        <taxon>Tracheophyta</taxon>
        <taxon>Spermatophyta</taxon>
        <taxon>Magnoliopsida</taxon>
        <taxon>eudicotyledons</taxon>
        <taxon>Gunneridae</taxon>
        <taxon>Pentapetalae</taxon>
        <taxon>rosids</taxon>
        <taxon>Vitales</taxon>
        <taxon>Vitaceae</taxon>
        <taxon>Viteae</taxon>
        <taxon>Vitis</taxon>
    </lineage>
</organism>